<keyword id="KW-0054">Arabinose catabolism</keyword>
<keyword id="KW-0119">Carbohydrate metabolism</keyword>
<keyword id="KW-0413">Isomerase</keyword>
<keyword id="KW-0464">Manganese</keyword>
<keyword id="KW-0479">Metal-binding</keyword>
<comment type="function">
    <text evidence="1">Catalyzes the conversion of L-arabinose to L-ribulose.</text>
</comment>
<comment type="catalytic activity">
    <reaction evidence="1">
        <text>beta-L-arabinopyranose = L-ribulose</text>
        <dbReference type="Rhea" id="RHEA:14821"/>
        <dbReference type="ChEBI" id="CHEBI:16880"/>
        <dbReference type="ChEBI" id="CHEBI:40886"/>
        <dbReference type="EC" id="5.3.1.4"/>
    </reaction>
</comment>
<comment type="cofactor">
    <cofactor evidence="1">
        <name>Mn(2+)</name>
        <dbReference type="ChEBI" id="CHEBI:29035"/>
    </cofactor>
    <text evidence="1">Binds 1 Mn(2+) ion per subunit.</text>
</comment>
<comment type="pathway">
    <text evidence="1">Carbohydrate degradation; L-arabinose degradation via L-ribulose; D-xylulose 5-phosphate from L-arabinose (bacterial route): step 1/3.</text>
</comment>
<comment type="subunit">
    <text evidence="1">Homohexamer.</text>
</comment>
<comment type="similarity">
    <text evidence="1">Belongs to the arabinose isomerase family.</text>
</comment>
<evidence type="ECO:0000255" key="1">
    <source>
        <dbReference type="HAMAP-Rule" id="MF_00519"/>
    </source>
</evidence>
<accession>C6DH19</accession>
<dbReference type="EC" id="5.3.1.4" evidence="1"/>
<dbReference type="EMBL" id="CP001657">
    <property type="protein sequence ID" value="ACT13068.1"/>
    <property type="molecule type" value="Genomic_DNA"/>
</dbReference>
<dbReference type="RefSeq" id="WP_015840261.1">
    <property type="nucleotide sequence ID" value="NC_012917.1"/>
</dbReference>
<dbReference type="SMR" id="C6DH19"/>
<dbReference type="STRING" id="561230.PC1_2027"/>
<dbReference type="KEGG" id="pct:PC1_2027"/>
<dbReference type="eggNOG" id="COG2160">
    <property type="taxonomic scope" value="Bacteria"/>
</dbReference>
<dbReference type="HOGENOM" id="CLU_045663_0_0_6"/>
<dbReference type="OrthoDB" id="9765600at2"/>
<dbReference type="UniPathway" id="UPA00145">
    <property type="reaction ID" value="UER00565"/>
</dbReference>
<dbReference type="Proteomes" id="UP000002736">
    <property type="component" value="Chromosome"/>
</dbReference>
<dbReference type="GO" id="GO:0005829">
    <property type="term" value="C:cytosol"/>
    <property type="evidence" value="ECO:0007669"/>
    <property type="project" value="TreeGrafter"/>
</dbReference>
<dbReference type="GO" id="GO:0008733">
    <property type="term" value="F:L-arabinose isomerase activity"/>
    <property type="evidence" value="ECO:0007669"/>
    <property type="project" value="UniProtKB-UniRule"/>
</dbReference>
<dbReference type="GO" id="GO:0030145">
    <property type="term" value="F:manganese ion binding"/>
    <property type="evidence" value="ECO:0007669"/>
    <property type="project" value="UniProtKB-UniRule"/>
</dbReference>
<dbReference type="GO" id="GO:0019569">
    <property type="term" value="P:L-arabinose catabolic process to xylulose 5-phosphate"/>
    <property type="evidence" value="ECO:0007669"/>
    <property type="project" value="UniProtKB-UniRule"/>
</dbReference>
<dbReference type="CDD" id="cd03557">
    <property type="entry name" value="L-arabinose_isomerase"/>
    <property type="match status" value="1"/>
</dbReference>
<dbReference type="FunFam" id="3.40.50.10940:FF:000001">
    <property type="entry name" value="L-arabinose isomerase"/>
    <property type="match status" value="1"/>
</dbReference>
<dbReference type="Gene3D" id="3.40.50.10940">
    <property type="match status" value="1"/>
</dbReference>
<dbReference type="HAMAP" id="MF_00519">
    <property type="entry name" value="Arabinose_Isome"/>
    <property type="match status" value="1"/>
</dbReference>
<dbReference type="InterPro" id="IPR024664">
    <property type="entry name" value="Ara_Isoase_C"/>
</dbReference>
<dbReference type="InterPro" id="IPR055390">
    <property type="entry name" value="AraA_central"/>
</dbReference>
<dbReference type="InterPro" id="IPR055389">
    <property type="entry name" value="AraA_N"/>
</dbReference>
<dbReference type="InterPro" id="IPR038583">
    <property type="entry name" value="AraA_N_sf"/>
</dbReference>
<dbReference type="InterPro" id="IPR004216">
    <property type="entry name" value="Fuc/Ara_isomerase_C"/>
</dbReference>
<dbReference type="InterPro" id="IPR009015">
    <property type="entry name" value="Fucose_isomerase_N/cen_sf"/>
</dbReference>
<dbReference type="InterPro" id="IPR003762">
    <property type="entry name" value="Lara_isomerase"/>
</dbReference>
<dbReference type="NCBIfam" id="NF002795">
    <property type="entry name" value="PRK02929.1"/>
    <property type="match status" value="1"/>
</dbReference>
<dbReference type="PANTHER" id="PTHR38464">
    <property type="entry name" value="L-ARABINOSE ISOMERASE"/>
    <property type="match status" value="1"/>
</dbReference>
<dbReference type="PANTHER" id="PTHR38464:SF1">
    <property type="entry name" value="L-ARABINOSE ISOMERASE"/>
    <property type="match status" value="1"/>
</dbReference>
<dbReference type="Pfam" id="PF24856">
    <property type="entry name" value="AraA_central"/>
    <property type="match status" value="1"/>
</dbReference>
<dbReference type="Pfam" id="PF02610">
    <property type="entry name" value="AraA_N"/>
    <property type="match status" value="1"/>
</dbReference>
<dbReference type="Pfam" id="PF11762">
    <property type="entry name" value="Arabinose_Iso_C"/>
    <property type="match status" value="1"/>
</dbReference>
<dbReference type="PIRSF" id="PIRSF001478">
    <property type="entry name" value="L-ara_isomerase"/>
    <property type="match status" value="1"/>
</dbReference>
<dbReference type="SUPFAM" id="SSF50443">
    <property type="entry name" value="FucI/AraA C-terminal domain-like"/>
    <property type="match status" value="1"/>
</dbReference>
<dbReference type="SUPFAM" id="SSF53743">
    <property type="entry name" value="FucI/AraA N-terminal and middle domains"/>
    <property type="match status" value="1"/>
</dbReference>
<sequence length="501" mass="55887">MDHFKQLEVWFVIGSQHLYGPETLRQVKENAEKVVTGLNQQANLPVKLVLKPLVKTPDEILALCRDANYQDNCIGLLTWLHTFSPAKMWIGGLSILSKPLLQFHTQFNAEVPWDTMDMDFMNLNQTAHGGREFGFIGARMRQAHQVVVGHWQDKNAHARIGKWMRVAAAIQESKQLKVARFGDNMREVAVTEGDKVGAQIQFGYSVSAWGLGDLTAVVDAVSKGDINALVDEYEASYQLTDAVKLNGANRQNLLDAAQIELGMKRFLEQGGYHAFTTDFENLYGLKQLPGLAVQRLMQQGYGFGGEGDWKTAALLRIMKVMASGLSGGTSFMEDYTYNFQNGNDLVVGSHMLEVCPTIAKEQKPILDAQYLGIGGKADPARLIFSTPAGPSLNASVIDMGDRFRMLVNLVDTIEQPHPLPKLPVARAIWKAQPSLDVAAEAWILAGGAHHTVFSQALDLEHMRLYAEMQNIELLVIDNETRLHEFKDALRWNEVYYKLCSR</sequence>
<reference key="1">
    <citation type="submission" date="2009-07" db="EMBL/GenBank/DDBJ databases">
        <title>Complete sequence of Pectobacterium carotovorum subsp. carotovorum PC1.</title>
        <authorList>
            <consortium name="US DOE Joint Genome Institute"/>
            <person name="Lucas S."/>
            <person name="Copeland A."/>
            <person name="Lapidus A."/>
            <person name="Glavina del Rio T."/>
            <person name="Tice H."/>
            <person name="Bruce D."/>
            <person name="Goodwin L."/>
            <person name="Pitluck S."/>
            <person name="Munk A.C."/>
            <person name="Brettin T."/>
            <person name="Detter J.C."/>
            <person name="Han C."/>
            <person name="Tapia R."/>
            <person name="Larimer F."/>
            <person name="Land M."/>
            <person name="Hauser L."/>
            <person name="Kyrpides N."/>
            <person name="Mikhailova N."/>
            <person name="Balakrishnan V."/>
            <person name="Glasner J."/>
            <person name="Perna N.T."/>
        </authorList>
    </citation>
    <scope>NUCLEOTIDE SEQUENCE [LARGE SCALE GENOMIC DNA]</scope>
    <source>
        <strain>PC1</strain>
    </source>
</reference>
<gene>
    <name evidence="1" type="primary">araA</name>
    <name type="ordered locus">PC1_2027</name>
</gene>
<protein>
    <recommendedName>
        <fullName evidence="1">L-arabinose isomerase</fullName>
        <ecNumber evidence="1">5.3.1.4</ecNumber>
    </recommendedName>
</protein>
<proteinExistence type="inferred from homology"/>
<name>ARAA_PECCP</name>
<feature type="chain" id="PRO_1000211742" description="L-arabinose isomerase">
    <location>
        <begin position="1"/>
        <end position="501"/>
    </location>
</feature>
<feature type="binding site" evidence="1">
    <location>
        <position position="306"/>
    </location>
    <ligand>
        <name>Mn(2+)</name>
        <dbReference type="ChEBI" id="CHEBI:29035"/>
    </ligand>
</feature>
<feature type="binding site" evidence="1">
    <location>
        <position position="333"/>
    </location>
    <ligand>
        <name>Mn(2+)</name>
        <dbReference type="ChEBI" id="CHEBI:29035"/>
    </ligand>
</feature>
<feature type="binding site" evidence="1">
    <location>
        <position position="350"/>
    </location>
    <ligand>
        <name>Mn(2+)</name>
        <dbReference type="ChEBI" id="CHEBI:29035"/>
    </ligand>
</feature>
<feature type="binding site" evidence="1">
    <location>
        <position position="450"/>
    </location>
    <ligand>
        <name>Mn(2+)</name>
        <dbReference type="ChEBI" id="CHEBI:29035"/>
    </ligand>
</feature>
<organism>
    <name type="scientific">Pectobacterium carotovorum subsp. carotovorum (strain PC1)</name>
    <dbReference type="NCBI Taxonomy" id="561230"/>
    <lineage>
        <taxon>Bacteria</taxon>
        <taxon>Pseudomonadati</taxon>
        <taxon>Pseudomonadota</taxon>
        <taxon>Gammaproteobacteria</taxon>
        <taxon>Enterobacterales</taxon>
        <taxon>Pectobacteriaceae</taxon>
        <taxon>Pectobacterium</taxon>
    </lineage>
</organism>